<gene>
    <name type="ORF">GA10892</name>
</gene>
<protein>
    <recommendedName>
        <fullName evidence="3">Mannose-1-phosphate guanylyltransferase catalytic subunit beta</fullName>
        <ecNumber evidence="1">2.7.7.13</ecNumber>
    </recommendedName>
    <alternativeName>
        <fullName>GDP-mannose pyrophosphorylase B</fullName>
        <shortName evidence="3">GMPPB</shortName>
    </alternativeName>
    <alternativeName>
        <fullName>GTP-mannose-1-phosphate guanylyltransferase beta</fullName>
    </alternativeName>
</protein>
<accession>Q295Y7</accession>
<dbReference type="EC" id="2.7.7.13" evidence="1"/>
<dbReference type="EMBL" id="CM000070">
    <property type="protein sequence ID" value="EAL28571.1"/>
    <property type="molecule type" value="Genomic_DNA"/>
</dbReference>
<dbReference type="SMR" id="Q295Y7"/>
<dbReference type="FunCoup" id="Q295Y7">
    <property type="interactions" value="1216"/>
</dbReference>
<dbReference type="STRING" id="46245.Q295Y7"/>
<dbReference type="EnsemblMetazoa" id="FBtr0378365">
    <property type="protein sequence ID" value="FBpp0339192"/>
    <property type="gene ID" value="FBgn0070948"/>
</dbReference>
<dbReference type="KEGG" id="dpo:4802517"/>
<dbReference type="CTD" id="29925"/>
<dbReference type="eggNOG" id="KOG1322">
    <property type="taxonomic scope" value="Eukaryota"/>
</dbReference>
<dbReference type="HOGENOM" id="CLU_029499_0_0_1"/>
<dbReference type="InParanoid" id="Q295Y7"/>
<dbReference type="OMA" id="GPNCWIC"/>
<dbReference type="PhylomeDB" id="Q295Y7"/>
<dbReference type="UniPathway" id="UPA00126">
    <property type="reaction ID" value="UER00930"/>
</dbReference>
<dbReference type="Proteomes" id="UP000001819">
    <property type="component" value="Chromosome 2"/>
</dbReference>
<dbReference type="Bgee" id="FBgn0070948">
    <property type="expression patterns" value="Expressed in female reproductive system and 3 other cell types or tissues"/>
</dbReference>
<dbReference type="GO" id="GO:0005525">
    <property type="term" value="F:GTP binding"/>
    <property type="evidence" value="ECO:0007669"/>
    <property type="project" value="UniProtKB-KW"/>
</dbReference>
<dbReference type="GO" id="GO:0004475">
    <property type="term" value="F:mannose-1-phosphate guanylyltransferase (GTP) activity"/>
    <property type="evidence" value="ECO:0007669"/>
    <property type="project" value="UniProtKB-EC"/>
</dbReference>
<dbReference type="GO" id="GO:0046872">
    <property type="term" value="F:metal ion binding"/>
    <property type="evidence" value="ECO:0007669"/>
    <property type="project" value="UniProtKB-KW"/>
</dbReference>
<dbReference type="GO" id="GO:0009298">
    <property type="term" value="P:GDP-mannose biosynthetic process"/>
    <property type="evidence" value="ECO:0007669"/>
    <property type="project" value="UniProtKB-UniPathway"/>
</dbReference>
<dbReference type="CDD" id="cd06425">
    <property type="entry name" value="M1P_guanylylT_B_like_N"/>
    <property type="match status" value="1"/>
</dbReference>
<dbReference type="FunFam" id="2.160.10.10:FF:000018">
    <property type="entry name" value="Mannose-1-phosphate guanyltransferase beta"/>
    <property type="match status" value="1"/>
</dbReference>
<dbReference type="FunFam" id="3.90.550.10:FF:000013">
    <property type="entry name" value="mannose-1-phosphate guanyltransferase beta"/>
    <property type="match status" value="1"/>
</dbReference>
<dbReference type="Gene3D" id="2.160.10.10">
    <property type="entry name" value="Hexapeptide repeat proteins"/>
    <property type="match status" value="1"/>
</dbReference>
<dbReference type="Gene3D" id="3.90.550.10">
    <property type="entry name" value="Spore Coat Polysaccharide Biosynthesis Protein SpsA, Chain A"/>
    <property type="match status" value="1"/>
</dbReference>
<dbReference type="InterPro" id="IPR056729">
    <property type="entry name" value="GMPPB_C"/>
</dbReference>
<dbReference type="InterPro" id="IPR045233">
    <property type="entry name" value="GMPPB_N"/>
</dbReference>
<dbReference type="InterPro" id="IPR018357">
    <property type="entry name" value="Hexapep_transf_CS"/>
</dbReference>
<dbReference type="InterPro" id="IPR050486">
    <property type="entry name" value="Mannose-1P_guanyltransferase"/>
</dbReference>
<dbReference type="InterPro" id="IPR005835">
    <property type="entry name" value="NTP_transferase_dom"/>
</dbReference>
<dbReference type="InterPro" id="IPR029044">
    <property type="entry name" value="Nucleotide-diphossugar_trans"/>
</dbReference>
<dbReference type="PANTHER" id="PTHR22572">
    <property type="entry name" value="SUGAR-1-PHOSPHATE GUANYL TRANSFERASE"/>
    <property type="match status" value="1"/>
</dbReference>
<dbReference type="Pfam" id="PF25087">
    <property type="entry name" value="GMPPB_C"/>
    <property type="match status" value="1"/>
</dbReference>
<dbReference type="Pfam" id="PF00483">
    <property type="entry name" value="NTP_transferase"/>
    <property type="match status" value="1"/>
</dbReference>
<dbReference type="SUPFAM" id="SSF53448">
    <property type="entry name" value="Nucleotide-diphospho-sugar transferases"/>
    <property type="match status" value="1"/>
</dbReference>
<dbReference type="PROSITE" id="PS00101">
    <property type="entry name" value="HEXAPEP_TRANSFERASES"/>
    <property type="match status" value="2"/>
</dbReference>
<organism evidence="4">
    <name type="scientific">Drosophila pseudoobscura pseudoobscura</name>
    <name type="common">Fruit fly</name>
    <dbReference type="NCBI Taxonomy" id="46245"/>
    <lineage>
        <taxon>Eukaryota</taxon>
        <taxon>Metazoa</taxon>
        <taxon>Ecdysozoa</taxon>
        <taxon>Arthropoda</taxon>
        <taxon>Hexapoda</taxon>
        <taxon>Insecta</taxon>
        <taxon>Pterygota</taxon>
        <taxon>Neoptera</taxon>
        <taxon>Endopterygota</taxon>
        <taxon>Diptera</taxon>
        <taxon>Brachycera</taxon>
        <taxon>Muscomorpha</taxon>
        <taxon>Ephydroidea</taxon>
        <taxon>Drosophilidae</taxon>
        <taxon>Drosophila</taxon>
        <taxon>Sophophora</taxon>
    </lineage>
</organism>
<feature type="chain" id="PRO_0000307172" description="Mannose-1-phosphate guanylyltransferase catalytic subunit beta">
    <location>
        <begin position="1"/>
        <end position="371"/>
    </location>
</feature>
<feature type="region of interest" description="Substrate-binding domain" evidence="2">
    <location>
        <begin position="14"/>
        <end position="233"/>
    </location>
</feature>
<feature type="region of interest" description="Hexapeptide repeat domain" evidence="2">
    <location>
        <begin position="256"/>
        <end position="371"/>
    </location>
</feature>
<feature type="active site" evidence="2">
    <location>
        <position position="173"/>
    </location>
</feature>
<feature type="binding site" evidence="2">
    <location>
        <position position="122"/>
    </location>
    <ligand>
        <name>GDP-alpha-D-mannose</name>
        <dbReference type="ChEBI" id="CHEBI:57527"/>
    </ligand>
</feature>
<feature type="binding site" evidence="2">
    <location>
        <position position="122"/>
    </location>
    <ligand>
        <name>Mg(2+)</name>
        <dbReference type="ChEBI" id="CHEBI:18420"/>
    </ligand>
</feature>
<feature type="binding site" evidence="2">
    <location>
        <position position="229"/>
    </location>
    <ligand>
        <name>GDP-alpha-D-mannose</name>
        <dbReference type="ChEBI" id="CHEBI:57527"/>
    </ligand>
</feature>
<feature type="binding site" evidence="2">
    <location>
        <position position="229"/>
    </location>
    <ligand>
        <name>Mg(2+)</name>
        <dbReference type="ChEBI" id="CHEBI:18420"/>
    </ligand>
</feature>
<comment type="function">
    <text evidence="1 2">Catalytic subunit of the GMPPA-GMPPB mannose-1-phosphate guanylyltransferase complex (By similarity). Catalyzes the formation of GDP-mannose, an essential precursor of glycan moieties of glycoproteins and glycolipids (By similarity). Can catalyze the reverse reaction in vitro (By similarity). Together with GMPPA regulates GDP-alpha-D-mannose levels (By similarity).</text>
</comment>
<comment type="catalytic activity">
    <reaction evidence="1">
        <text>alpha-D-mannose 1-phosphate + GTP + H(+) = GDP-alpha-D-mannose + diphosphate</text>
        <dbReference type="Rhea" id="RHEA:15229"/>
        <dbReference type="ChEBI" id="CHEBI:15378"/>
        <dbReference type="ChEBI" id="CHEBI:33019"/>
        <dbReference type="ChEBI" id="CHEBI:37565"/>
        <dbReference type="ChEBI" id="CHEBI:57527"/>
        <dbReference type="ChEBI" id="CHEBI:58409"/>
        <dbReference type="EC" id="2.7.7.13"/>
    </reaction>
    <physiologicalReaction direction="left-to-right" evidence="2">
        <dbReference type="Rhea" id="RHEA:15230"/>
    </physiologicalReaction>
    <physiologicalReaction direction="right-to-left" evidence="2">
        <dbReference type="Rhea" id="RHEA:15231"/>
    </physiologicalReaction>
</comment>
<comment type="cofactor">
    <cofactor evidence="2">
        <name>Mg(2+)</name>
        <dbReference type="ChEBI" id="CHEBI:18420"/>
    </cofactor>
    <text evidence="2">Coordinates binding with substrate and required for enzymatic activity.</text>
</comment>
<comment type="activity regulation">
    <text evidence="2">Enzyme activity is reduced by incorporation into the GMPPA-GMPPB mannose-1-phosphate guanylyltransferase complex. Allosterically inhibited, when part of the GMPPA-GMPPB complex, by GDP-alpha-D-mannose binding to Gmppa.</text>
</comment>
<comment type="pathway">
    <text evidence="1">Nucleotide-sugar biosynthesis; GDP-alpha-D-mannose biosynthesis; GDP-alpha-D-mannose from alpha-D-mannose 1-phosphate (GTP route): step 1/1.</text>
</comment>
<comment type="subunit">
    <text evidence="2">Component of the GMPPA-GMPPB mannose-1-phosphate guanylyltransferase complex composed of 4 Gmppa subunits and 8 Gmppb subunits; the complex is organized into three layers, a central layer made up of 2 Gmppa dimers sandwiched between two layers each made up of 2 Gmppb dimers. Gmppb catalytic activity is reduced when part of the complex and binding of GDP-alpha-D-Mannose by Gmppa induces allosteric feedback inhibition of Gmppb.</text>
</comment>
<comment type="domain">
    <text evidence="2">The N-terminal substrate-binding domain adopts a Rossman-like fold and has a binding pocket for GTP or GDP-alpha-D-mannose (By similarity). Substrate binding is coordinated by an Mg(2+) ion (By similarity).</text>
</comment>
<comment type="domain">
    <text evidence="2">The C-terminal domain consists of a series of tandem hexapeptide repeats that adopt a beta-helix conformation (By similarity). The beta-helix forms several protein interaction surfaces involved in assembly of the GMPPA-GMPPB mannose-1-phosphate guanylyltransferase complex (By similarity).</text>
</comment>
<comment type="similarity">
    <text evidence="3">Belongs to the transferase hexapeptide repeat family.</text>
</comment>
<keyword id="KW-0342">GTP-binding</keyword>
<keyword id="KW-0460">Magnesium</keyword>
<keyword id="KW-0479">Metal-binding</keyword>
<keyword id="KW-0547">Nucleotide-binding</keyword>
<keyword id="KW-0548">Nucleotidyltransferase</keyword>
<keyword id="KW-1185">Reference proteome</keyword>
<keyword id="KW-0808">Transferase</keyword>
<proteinExistence type="inferred from homology"/>
<name>GMPPB_DROPS</name>
<reference key="1">
    <citation type="journal article" date="2005" name="Genome Res.">
        <title>Comparative genome sequencing of Drosophila pseudoobscura: chromosomal, gene, and cis-element evolution.</title>
        <authorList>
            <person name="Richards S."/>
            <person name="Liu Y."/>
            <person name="Bettencourt B.R."/>
            <person name="Hradecky P."/>
            <person name="Letovsky S."/>
            <person name="Nielsen R."/>
            <person name="Thornton K."/>
            <person name="Hubisz M.J."/>
            <person name="Chen R."/>
            <person name="Meisel R.P."/>
            <person name="Couronne O."/>
            <person name="Hua S."/>
            <person name="Smith M.A."/>
            <person name="Zhang P."/>
            <person name="Liu J."/>
            <person name="Bussemaker H.J."/>
            <person name="van Batenburg M.F."/>
            <person name="Howells S.L."/>
            <person name="Scherer S.E."/>
            <person name="Sodergren E."/>
            <person name="Matthews B.B."/>
            <person name="Crosby M.A."/>
            <person name="Schroeder A.J."/>
            <person name="Ortiz-Barrientos D."/>
            <person name="Rives C.M."/>
            <person name="Metzker M.L."/>
            <person name="Muzny D.M."/>
            <person name="Scott G."/>
            <person name="Steffen D."/>
            <person name="Wheeler D.A."/>
            <person name="Worley K.C."/>
            <person name="Havlak P."/>
            <person name="Durbin K.J."/>
            <person name="Egan A."/>
            <person name="Gill R."/>
            <person name="Hume J."/>
            <person name="Morgan M.B."/>
            <person name="Miner G."/>
            <person name="Hamilton C."/>
            <person name="Huang Y."/>
            <person name="Waldron L."/>
            <person name="Verduzco D."/>
            <person name="Clerc-Blankenburg K.P."/>
            <person name="Dubchak I."/>
            <person name="Noor M.A.F."/>
            <person name="Anderson W."/>
            <person name="White K.P."/>
            <person name="Clark A.G."/>
            <person name="Schaeffer S.W."/>
            <person name="Gelbart W.M."/>
            <person name="Weinstock G.M."/>
            <person name="Gibbs R.A."/>
        </authorList>
    </citation>
    <scope>NUCLEOTIDE SEQUENCE [LARGE SCALE GENOMIC DNA]</scope>
    <source>
        <strain>MV2-25 / Tucson 14011-0121.94</strain>
    </source>
</reference>
<sequence length="371" mass="40603">MCGSPNTTVGNGTRALILVGGYGTRLRPLTLSTPKPLVEFANKPILLHQLEALVDAGCRQVILAVSYRAEQMEKELKVEADKLGVELIFSHETEPLGTAGPLALAKSILSASPEPFFVLNSDVICDFPFKQLVQFHRNHGKEGTIVVTKVEEPSKYGVVLYDEDGCIKNFIEKPQEFVSNKINAGIYIFNPSVLERIEVKPTSIEKEVFPAMAEQQELYAMDLTGFWMDIGQPKDFLTGMCLYLSSLRQKQSPKLYTGPGVVGNVLVDPTATIGEGCRIGPNVTIGPDVIIEDGVCIKRATILKGAIVRSHSWLDSCIVGWRSTVGRWVRIEGITVLGEDVIVKDELYVNGGQVLPHKSIAASVPEPQIIM</sequence>
<evidence type="ECO:0000250" key="1">
    <source>
        <dbReference type="UniProtKB" id="P0C5I2"/>
    </source>
</evidence>
<evidence type="ECO:0000250" key="2">
    <source>
        <dbReference type="UniProtKB" id="Q9Y5P6"/>
    </source>
</evidence>
<evidence type="ECO:0000305" key="3"/>
<evidence type="ECO:0000312" key="4">
    <source>
        <dbReference type="Proteomes" id="UP000001819"/>
    </source>
</evidence>